<feature type="chain" id="PRO_1000164483" description="UPF0434 protein YcaR">
    <location>
        <begin position="1"/>
        <end position="60"/>
    </location>
</feature>
<protein>
    <recommendedName>
        <fullName evidence="1">UPF0434 protein YcaR</fullName>
    </recommendedName>
</protein>
<sequence length="60" mass="6855">MDHRLLEIIACPVCNGKLWYNQEKQELICKLDNLAFPLRDGIPVLLETEARVLTADESKS</sequence>
<evidence type="ECO:0000255" key="1">
    <source>
        <dbReference type="HAMAP-Rule" id="MF_01187"/>
    </source>
</evidence>
<comment type="similarity">
    <text evidence="1">Belongs to the UPF0434 family.</text>
</comment>
<gene>
    <name evidence="1" type="primary">ycaR</name>
    <name type="ordered locus">EC55989_0962</name>
</gene>
<proteinExistence type="inferred from homology"/>
<name>YCAR_ECO55</name>
<keyword id="KW-1185">Reference proteome</keyword>
<accession>B7LE15</accession>
<dbReference type="EMBL" id="CU928145">
    <property type="protein sequence ID" value="CAU96826.1"/>
    <property type="molecule type" value="Genomic_DNA"/>
</dbReference>
<dbReference type="RefSeq" id="WP_000350058.1">
    <property type="nucleotide sequence ID" value="NC_011748.1"/>
</dbReference>
<dbReference type="SMR" id="B7LE15"/>
<dbReference type="GeneID" id="93776498"/>
<dbReference type="KEGG" id="eck:EC55989_0962"/>
<dbReference type="HOGENOM" id="CLU_155659_3_1_6"/>
<dbReference type="Proteomes" id="UP000000746">
    <property type="component" value="Chromosome"/>
</dbReference>
<dbReference type="GO" id="GO:0005829">
    <property type="term" value="C:cytosol"/>
    <property type="evidence" value="ECO:0007669"/>
    <property type="project" value="TreeGrafter"/>
</dbReference>
<dbReference type="FunFam" id="2.20.25.10:FF:000002">
    <property type="entry name" value="UPF0434 protein YcaR"/>
    <property type="match status" value="1"/>
</dbReference>
<dbReference type="Gene3D" id="2.20.25.10">
    <property type="match status" value="1"/>
</dbReference>
<dbReference type="HAMAP" id="MF_01187">
    <property type="entry name" value="UPF0434"/>
    <property type="match status" value="1"/>
</dbReference>
<dbReference type="InterPro" id="IPR005651">
    <property type="entry name" value="Trm112-like"/>
</dbReference>
<dbReference type="NCBIfam" id="NF008806">
    <property type="entry name" value="PRK11827.1"/>
    <property type="match status" value="1"/>
</dbReference>
<dbReference type="PANTHER" id="PTHR33505:SF4">
    <property type="entry name" value="PROTEIN PREY, MITOCHONDRIAL"/>
    <property type="match status" value="1"/>
</dbReference>
<dbReference type="PANTHER" id="PTHR33505">
    <property type="entry name" value="ZGC:162634"/>
    <property type="match status" value="1"/>
</dbReference>
<dbReference type="Pfam" id="PF03966">
    <property type="entry name" value="Trm112p"/>
    <property type="match status" value="1"/>
</dbReference>
<dbReference type="SUPFAM" id="SSF158997">
    <property type="entry name" value="Trm112p-like"/>
    <property type="match status" value="1"/>
</dbReference>
<reference key="1">
    <citation type="journal article" date="2009" name="PLoS Genet.">
        <title>Organised genome dynamics in the Escherichia coli species results in highly diverse adaptive paths.</title>
        <authorList>
            <person name="Touchon M."/>
            <person name="Hoede C."/>
            <person name="Tenaillon O."/>
            <person name="Barbe V."/>
            <person name="Baeriswyl S."/>
            <person name="Bidet P."/>
            <person name="Bingen E."/>
            <person name="Bonacorsi S."/>
            <person name="Bouchier C."/>
            <person name="Bouvet O."/>
            <person name="Calteau A."/>
            <person name="Chiapello H."/>
            <person name="Clermont O."/>
            <person name="Cruveiller S."/>
            <person name="Danchin A."/>
            <person name="Diard M."/>
            <person name="Dossat C."/>
            <person name="Karoui M.E."/>
            <person name="Frapy E."/>
            <person name="Garry L."/>
            <person name="Ghigo J.M."/>
            <person name="Gilles A.M."/>
            <person name="Johnson J."/>
            <person name="Le Bouguenec C."/>
            <person name="Lescat M."/>
            <person name="Mangenot S."/>
            <person name="Martinez-Jehanne V."/>
            <person name="Matic I."/>
            <person name="Nassif X."/>
            <person name="Oztas S."/>
            <person name="Petit M.A."/>
            <person name="Pichon C."/>
            <person name="Rouy Z."/>
            <person name="Ruf C.S."/>
            <person name="Schneider D."/>
            <person name="Tourret J."/>
            <person name="Vacherie B."/>
            <person name="Vallenet D."/>
            <person name="Medigue C."/>
            <person name="Rocha E.P.C."/>
            <person name="Denamur E."/>
        </authorList>
    </citation>
    <scope>NUCLEOTIDE SEQUENCE [LARGE SCALE GENOMIC DNA]</scope>
    <source>
        <strain>55989 / EAEC</strain>
    </source>
</reference>
<organism>
    <name type="scientific">Escherichia coli (strain 55989 / EAEC)</name>
    <dbReference type="NCBI Taxonomy" id="585055"/>
    <lineage>
        <taxon>Bacteria</taxon>
        <taxon>Pseudomonadati</taxon>
        <taxon>Pseudomonadota</taxon>
        <taxon>Gammaproteobacteria</taxon>
        <taxon>Enterobacterales</taxon>
        <taxon>Enterobacteriaceae</taxon>
        <taxon>Escherichia</taxon>
    </lineage>
</organism>